<name>X_HBVGO</name>
<gene>
    <name evidence="1" type="primary">X</name>
</gene>
<sequence length="154" mass="16694">MAARLCCQLDPARDVLCLRPVGAEPCRRPVSGSLRTLPSSLPSAVPADHGAHLSLRGLPVCAFSSAGPCALRFTSARCMETTVNAPRNLPTVLHKRTLGLSAMSTTKIETYFKDCVFKDWEELGEEIRFKVFVLGGCRHKLVCAPAPCNFFTSA</sequence>
<feature type="chain" id="PRO_0000322112" description="Protein X">
    <location>
        <begin position="1"/>
        <end position="154"/>
    </location>
</feature>
<feature type="region of interest" description="Mitochondrial targeting sequence" evidence="1">
    <location>
        <begin position="68"/>
        <end position="117"/>
    </location>
</feature>
<protein>
    <recommendedName>
        <fullName evidence="1">Protein X</fullName>
    </recommendedName>
    <alternativeName>
        <fullName evidence="1">HBx</fullName>
    </alternativeName>
    <alternativeName>
        <fullName evidence="1">Peptide X</fullName>
    </alternativeName>
    <alternativeName>
        <fullName evidence="1">pX</fullName>
    </alternativeName>
</protein>
<evidence type="ECO:0000255" key="1">
    <source>
        <dbReference type="HAMAP-Rule" id="MF_04074"/>
    </source>
</evidence>
<proteinExistence type="inferred from homology"/>
<comment type="function">
    <text evidence="1">Multifunctional protein that plays a role in silencing host antiviral defenses and promoting viral transcription. Does not seem to be essential for HBV infection. May be directly involved in development of cirrhosis and liver cancer (hepatocellular carcinoma). Most of cytosolic activities involve modulation of cytosolic calcium. The effect on apoptosis is controversial depending on the cell types in which the studies have been conducted. May induce apoptosis by localizing in mitochondria and causing loss of mitochondrial membrane potential. May also modulate apoptosis by binding host CFLAR, a key regulator of the death-inducing signaling complex (DISC). Promotes viral transcription by using the host E3 ubiquitin ligase DDB1 to target the SMC5-SMC6 complex to proteasomal degradation. This host complex would otherwise bind to viral episomal DNA, and prevents its transcription. Moderately stimulates transcription of many different viral and cellular transcription elements. Promoters and enhancers stimulated by HBx contain DNA binding sites for NF-kappa-B, AP-1, AP-2, c-EBP, ATF/CREB, or the calcium-activated factor NF-AT.</text>
</comment>
<comment type="subunit">
    <text evidence="1">May form homodimer. May interact with host CEBPA, CFLAR, CREB1, DDB1, E4F1, HBXIP, HSPD1/HSP60, NFKBIA, POLR2E and SMAD4. Interacts with host SMC5-SMC6 complex and induces its degradation. Interacts with host TRPC4AP; leading to prevent ubiquitination of TRPC4AP. Interacts with host PLSCR1; this interaction promotes ubiquitination and degradation of HBx and impairs HBx-mediated cell proliferation.</text>
</comment>
<comment type="subcellular location">
    <subcellularLocation>
        <location evidence="1">Host cytoplasm</location>
    </subcellularLocation>
    <subcellularLocation>
        <location evidence="1">Host nucleus</location>
    </subcellularLocation>
    <subcellularLocation>
        <location evidence="1">Host mitochondrion</location>
    </subcellularLocation>
    <text evidence="1">Mainly cytoplasmic as only a fraction is detected in the nucleus. In cytoplasm, a minor fraction associates with mitochondria or proteasomes.</text>
</comment>
<comment type="PTM">
    <text evidence="1">A fraction may be phosphorylated in insect cells and HepG2 cells, a human hepatoblastoma cell line. Phosphorylated in vitro by host protein kinase C or mitogen-activated protein kinase. N-acetylated in insect cells.</text>
</comment>
<comment type="similarity">
    <text evidence="1">Belongs to the orthohepadnavirus protein X family.</text>
</comment>
<keyword id="KW-1074">Activation of host NF-kappa-B by virus</keyword>
<keyword id="KW-0010">Activator</keyword>
<keyword id="KW-0053">Apoptosis</keyword>
<keyword id="KW-1035">Host cytoplasm</keyword>
<keyword id="KW-1079">Host G2/M cell cycle arrest by virus</keyword>
<keyword id="KW-1045">Host mitochondrion</keyword>
<keyword id="KW-1048">Host nucleus</keyword>
<keyword id="KW-0945">Host-virus interaction</keyword>
<keyword id="KW-1121">Modulation of host cell cycle by virus</keyword>
<keyword id="KW-0804">Transcription</keyword>
<keyword id="KW-0805">Transcription regulation</keyword>
<organismHost>
    <name type="scientific">Gorilla gorilla</name>
    <name type="common">western gorilla</name>
    <dbReference type="NCBI Taxonomy" id="9593"/>
</organismHost>
<reference key="1">
    <citation type="journal article" date="2000" name="J. Virol.">
        <title>Molecular epidemiology of hepatitis B virus variants in nonhuman primates.</title>
        <authorList>
            <person name="Grethe S."/>
            <person name="Heckel J.O."/>
            <person name="Rietschel W."/>
            <person name="Hufert F.T."/>
        </authorList>
    </citation>
    <scope>NUCLEOTIDE SEQUENCE [GENOMIC DNA]</scope>
</reference>
<organism>
    <name type="scientific">Gorilla hepatitis B virus (isolate Cameroon/gor97)</name>
    <name type="common">HBVgor</name>
    <dbReference type="NCBI Taxonomy" id="489546"/>
    <lineage>
        <taxon>Viruses</taxon>
        <taxon>Riboviria</taxon>
        <taxon>Pararnavirae</taxon>
        <taxon>Artverviricota</taxon>
        <taxon>Revtraviricetes</taxon>
        <taxon>Blubervirales</taxon>
        <taxon>Hepadnaviridae</taxon>
        <taxon>Orthohepadnavirus</taxon>
        <taxon>Hepatitis B virus</taxon>
    </lineage>
</organism>
<accession>Q9YJT2</accession>
<dbReference type="EMBL" id="AJ131567">
    <property type="protein sequence ID" value="CAA10424.1"/>
    <property type="molecule type" value="Genomic_DNA"/>
</dbReference>
<dbReference type="SMR" id="Q9YJT2"/>
<dbReference type="Proteomes" id="UP000007535">
    <property type="component" value="Segment"/>
</dbReference>
<dbReference type="GO" id="GO:0033650">
    <property type="term" value="C:host cell mitochondrion"/>
    <property type="evidence" value="ECO:0007669"/>
    <property type="project" value="UniProtKB-SubCell"/>
</dbReference>
<dbReference type="GO" id="GO:0042025">
    <property type="term" value="C:host cell nucleus"/>
    <property type="evidence" value="ECO:0007669"/>
    <property type="project" value="UniProtKB-SubCell"/>
</dbReference>
<dbReference type="GO" id="GO:0006351">
    <property type="term" value="P:DNA-templated transcription"/>
    <property type="evidence" value="ECO:0007669"/>
    <property type="project" value="UniProtKB-UniRule"/>
</dbReference>
<dbReference type="GO" id="GO:0085033">
    <property type="term" value="P:symbiont-mediated activation of host NF-kappaB cascade"/>
    <property type="evidence" value="ECO:0007669"/>
    <property type="project" value="UniProtKB-UniRule"/>
</dbReference>
<dbReference type="GO" id="GO:0039592">
    <property type="term" value="P:symbiont-mediated arrest of host cell cycle during G2/M transition"/>
    <property type="evidence" value="ECO:0007669"/>
    <property type="project" value="UniProtKB-UniRule"/>
</dbReference>
<dbReference type="GO" id="GO:0019079">
    <property type="term" value="P:viral genome replication"/>
    <property type="evidence" value="ECO:0007669"/>
    <property type="project" value="UniProtKB-UniRule"/>
</dbReference>
<dbReference type="HAMAP" id="MF_04074">
    <property type="entry name" value="HBV_X"/>
    <property type="match status" value="1"/>
</dbReference>
<dbReference type="InterPro" id="IPR000236">
    <property type="entry name" value="Transactivation_prot_X"/>
</dbReference>
<dbReference type="Pfam" id="PF00739">
    <property type="entry name" value="X"/>
    <property type="match status" value="1"/>
</dbReference>